<sequence>MTTAAELRAESARLLAAKGGNSQGLVPTMGALHSGHAALARTAVAENDVVVATIFVNPLQFGDAVDLDRYPRTLDADMALLDAEGVDLVFAPSVDEVYPGGQPLVRVTSGPLGEKWEGASRPGHFDGALTVVAKLLHYGLPGGAAADGTTAAYRAYFGQKDAQQLALVKRMVSDLNFPVEIIPVPIVRSEDGLALSSRNRFLSDAERDAALVLSRALRLIESRANAHEPLHLDSAVALVESQPLVELDYFDVVDPATLEPLAENCKETPFRGEGLAIIAAKVGAVRLIDNAPLFS</sequence>
<reference key="1">
    <citation type="journal article" date="2006" name="PLoS Genet.">
        <title>Secrets of soil survival revealed by the genome sequence of Arthrobacter aurescens TC1.</title>
        <authorList>
            <person name="Mongodin E.F."/>
            <person name="Shapir N."/>
            <person name="Daugherty S.C."/>
            <person name="DeBoy R.T."/>
            <person name="Emerson J.B."/>
            <person name="Shvartzbeyn A."/>
            <person name="Radune D."/>
            <person name="Vamathevan J."/>
            <person name="Riggs F."/>
            <person name="Grinberg V."/>
            <person name="Khouri H.M."/>
            <person name="Wackett L.P."/>
            <person name="Nelson K.E."/>
            <person name="Sadowsky M.J."/>
        </authorList>
    </citation>
    <scope>NUCLEOTIDE SEQUENCE [LARGE SCALE GENOMIC DNA]</scope>
    <source>
        <strain>TC1</strain>
    </source>
</reference>
<feature type="chain" id="PRO_0000305392" description="Pantothenate synthetase">
    <location>
        <begin position="1"/>
        <end position="295"/>
    </location>
</feature>
<feature type="active site" description="Proton donor" evidence="1">
    <location>
        <position position="36"/>
    </location>
</feature>
<feature type="binding site" evidence="1">
    <location>
        <begin position="29"/>
        <end position="36"/>
    </location>
    <ligand>
        <name>ATP</name>
        <dbReference type="ChEBI" id="CHEBI:30616"/>
    </ligand>
</feature>
<feature type="binding site" evidence="1">
    <location>
        <position position="60"/>
    </location>
    <ligand>
        <name>(R)-pantoate</name>
        <dbReference type="ChEBI" id="CHEBI:15980"/>
    </ligand>
</feature>
<feature type="binding site" evidence="1">
    <location>
        <position position="60"/>
    </location>
    <ligand>
        <name>beta-alanine</name>
        <dbReference type="ChEBI" id="CHEBI:57966"/>
    </ligand>
</feature>
<feature type="binding site" evidence="1">
    <location>
        <begin position="158"/>
        <end position="161"/>
    </location>
    <ligand>
        <name>ATP</name>
        <dbReference type="ChEBI" id="CHEBI:30616"/>
    </ligand>
</feature>
<feature type="binding site" evidence="1">
    <location>
        <position position="164"/>
    </location>
    <ligand>
        <name>(R)-pantoate</name>
        <dbReference type="ChEBI" id="CHEBI:15980"/>
    </ligand>
</feature>
<feature type="binding site" evidence="1">
    <location>
        <position position="187"/>
    </location>
    <ligand>
        <name>ATP</name>
        <dbReference type="ChEBI" id="CHEBI:30616"/>
    </ligand>
</feature>
<feature type="binding site" evidence="1">
    <location>
        <begin position="195"/>
        <end position="198"/>
    </location>
    <ligand>
        <name>ATP</name>
        <dbReference type="ChEBI" id="CHEBI:30616"/>
    </ligand>
</feature>
<keyword id="KW-0067">ATP-binding</keyword>
<keyword id="KW-0963">Cytoplasm</keyword>
<keyword id="KW-0436">Ligase</keyword>
<keyword id="KW-0547">Nucleotide-binding</keyword>
<keyword id="KW-0566">Pantothenate biosynthesis</keyword>
<proteinExistence type="inferred from homology"/>
<organism>
    <name type="scientific">Paenarthrobacter aurescens (strain TC1)</name>
    <dbReference type="NCBI Taxonomy" id="290340"/>
    <lineage>
        <taxon>Bacteria</taxon>
        <taxon>Bacillati</taxon>
        <taxon>Actinomycetota</taxon>
        <taxon>Actinomycetes</taxon>
        <taxon>Micrococcales</taxon>
        <taxon>Micrococcaceae</taxon>
        <taxon>Paenarthrobacter</taxon>
    </lineage>
</organism>
<gene>
    <name evidence="1" type="primary">panC</name>
    <name type="ordered locus">AAur_0147</name>
</gene>
<name>PANC_PAEAT</name>
<accession>A1R163</accession>
<dbReference type="EC" id="6.3.2.1" evidence="1"/>
<dbReference type="EMBL" id="CP000474">
    <property type="protein sequence ID" value="ABM07369.1"/>
    <property type="status" value="ALT_INIT"/>
    <property type="molecule type" value="Genomic_DNA"/>
</dbReference>
<dbReference type="SMR" id="A1R163"/>
<dbReference type="STRING" id="290340.AAur_0147"/>
<dbReference type="KEGG" id="aau:AAur_0147"/>
<dbReference type="eggNOG" id="COG0414">
    <property type="taxonomic scope" value="Bacteria"/>
</dbReference>
<dbReference type="HOGENOM" id="CLU_047148_0_2_11"/>
<dbReference type="UniPathway" id="UPA00028">
    <property type="reaction ID" value="UER00005"/>
</dbReference>
<dbReference type="Proteomes" id="UP000000637">
    <property type="component" value="Chromosome"/>
</dbReference>
<dbReference type="GO" id="GO:0005829">
    <property type="term" value="C:cytosol"/>
    <property type="evidence" value="ECO:0007669"/>
    <property type="project" value="TreeGrafter"/>
</dbReference>
<dbReference type="GO" id="GO:0005524">
    <property type="term" value="F:ATP binding"/>
    <property type="evidence" value="ECO:0007669"/>
    <property type="project" value="UniProtKB-KW"/>
</dbReference>
<dbReference type="GO" id="GO:0004592">
    <property type="term" value="F:pantoate-beta-alanine ligase activity"/>
    <property type="evidence" value="ECO:0007669"/>
    <property type="project" value="UniProtKB-UniRule"/>
</dbReference>
<dbReference type="GO" id="GO:0015940">
    <property type="term" value="P:pantothenate biosynthetic process"/>
    <property type="evidence" value="ECO:0007669"/>
    <property type="project" value="UniProtKB-UniRule"/>
</dbReference>
<dbReference type="CDD" id="cd00560">
    <property type="entry name" value="PanC"/>
    <property type="match status" value="1"/>
</dbReference>
<dbReference type="Gene3D" id="3.40.50.620">
    <property type="entry name" value="HUPs"/>
    <property type="match status" value="1"/>
</dbReference>
<dbReference type="Gene3D" id="3.30.1300.10">
    <property type="entry name" value="Pantoate-beta-alanine ligase, C-terminal domain"/>
    <property type="match status" value="1"/>
</dbReference>
<dbReference type="HAMAP" id="MF_00158">
    <property type="entry name" value="PanC"/>
    <property type="match status" value="1"/>
</dbReference>
<dbReference type="InterPro" id="IPR003721">
    <property type="entry name" value="Pantoate_ligase"/>
</dbReference>
<dbReference type="InterPro" id="IPR042176">
    <property type="entry name" value="Pantoate_ligase_C"/>
</dbReference>
<dbReference type="InterPro" id="IPR014729">
    <property type="entry name" value="Rossmann-like_a/b/a_fold"/>
</dbReference>
<dbReference type="NCBIfam" id="TIGR00018">
    <property type="entry name" value="panC"/>
    <property type="match status" value="1"/>
</dbReference>
<dbReference type="PANTHER" id="PTHR21299">
    <property type="entry name" value="CYTIDYLATE KINASE/PANTOATE-BETA-ALANINE LIGASE"/>
    <property type="match status" value="1"/>
</dbReference>
<dbReference type="PANTHER" id="PTHR21299:SF1">
    <property type="entry name" value="PANTOATE--BETA-ALANINE LIGASE"/>
    <property type="match status" value="1"/>
</dbReference>
<dbReference type="Pfam" id="PF02569">
    <property type="entry name" value="Pantoate_ligase"/>
    <property type="match status" value="1"/>
</dbReference>
<dbReference type="SUPFAM" id="SSF52374">
    <property type="entry name" value="Nucleotidylyl transferase"/>
    <property type="match status" value="1"/>
</dbReference>
<evidence type="ECO:0000255" key="1">
    <source>
        <dbReference type="HAMAP-Rule" id="MF_00158"/>
    </source>
</evidence>
<evidence type="ECO:0000305" key="2"/>
<comment type="function">
    <text evidence="1">Catalyzes the condensation of pantoate with beta-alanine in an ATP-dependent reaction via a pantoyl-adenylate intermediate.</text>
</comment>
<comment type="catalytic activity">
    <reaction evidence="1">
        <text>(R)-pantoate + beta-alanine + ATP = (R)-pantothenate + AMP + diphosphate + H(+)</text>
        <dbReference type="Rhea" id="RHEA:10912"/>
        <dbReference type="ChEBI" id="CHEBI:15378"/>
        <dbReference type="ChEBI" id="CHEBI:15980"/>
        <dbReference type="ChEBI" id="CHEBI:29032"/>
        <dbReference type="ChEBI" id="CHEBI:30616"/>
        <dbReference type="ChEBI" id="CHEBI:33019"/>
        <dbReference type="ChEBI" id="CHEBI:57966"/>
        <dbReference type="ChEBI" id="CHEBI:456215"/>
        <dbReference type="EC" id="6.3.2.1"/>
    </reaction>
</comment>
<comment type="pathway">
    <text evidence="1">Cofactor biosynthesis; (R)-pantothenate biosynthesis; (R)-pantothenate from (R)-pantoate and beta-alanine: step 1/1.</text>
</comment>
<comment type="subunit">
    <text evidence="1">Homodimer.</text>
</comment>
<comment type="subcellular location">
    <subcellularLocation>
        <location evidence="1">Cytoplasm</location>
    </subcellularLocation>
</comment>
<comment type="miscellaneous">
    <text evidence="1">The reaction proceeds by a bi uni uni bi ping pong mechanism.</text>
</comment>
<comment type="similarity">
    <text evidence="1">Belongs to the pantothenate synthetase family.</text>
</comment>
<comment type="sequence caution" evidence="2">
    <conflict type="erroneous initiation">
        <sequence resource="EMBL-CDS" id="ABM07369"/>
    </conflict>
</comment>
<protein>
    <recommendedName>
        <fullName evidence="1">Pantothenate synthetase</fullName>
        <shortName evidence="1">PS</shortName>
        <ecNumber evidence="1">6.3.2.1</ecNumber>
    </recommendedName>
    <alternativeName>
        <fullName evidence="1">Pantoate--beta-alanine ligase</fullName>
    </alternativeName>
    <alternativeName>
        <fullName evidence="1">Pantoate-activating enzyme</fullName>
    </alternativeName>
</protein>